<feature type="chain" id="PRO_0000253097" description="Putative membrane protein insertion efficiency factor">
    <location>
        <begin position="1"/>
        <end position="103"/>
    </location>
</feature>
<comment type="function">
    <text evidence="1">Could be involved in insertion of integral membrane proteins into the membrane.</text>
</comment>
<comment type="subcellular location">
    <subcellularLocation>
        <location evidence="1">Cell inner membrane</location>
        <topology evidence="1">Peripheral membrane protein</topology>
        <orientation evidence="1">Cytoplasmic side</orientation>
    </subcellularLocation>
</comment>
<comment type="similarity">
    <text evidence="1">Belongs to the UPF0161 family.</text>
</comment>
<sequence length="103" mass="11427">MSFKSLLKNLPKFFFLGLIHIYRWTISPLLGSPCRFFPTCSQYALQALKHHGCIKGLGFTIKRIGKCGPWHPGGVDLVPMTTLEESLDISPATNDDDSCDSQA</sequence>
<protein>
    <recommendedName>
        <fullName evidence="1">Putative membrane protein insertion efficiency factor</fullName>
    </recommendedName>
</protein>
<organism>
    <name type="scientific">Chlamydia felis (strain Fe/C-56)</name>
    <name type="common">Chlamydophila felis</name>
    <dbReference type="NCBI Taxonomy" id="264202"/>
    <lineage>
        <taxon>Bacteria</taxon>
        <taxon>Pseudomonadati</taxon>
        <taxon>Chlamydiota</taxon>
        <taxon>Chlamydiia</taxon>
        <taxon>Chlamydiales</taxon>
        <taxon>Chlamydiaceae</taxon>
        <taxon>Chlamydia/Chlamydophila group</taxon>
        <taxon>Chlamydia</taxon>
    </lineage>
</organism>
<keyword id="KW-0997">Cell inner membrane</keyword>
<keyword id="KW-1003">Cell membrane</keyword>
<keyword id="KW-0472">Membrane</keyword>
<reference key="1">
    <citation type="journal article" date="2006" name="DNA Res.">
        <title>Genome sequence of the cat pathogen, Chlamydophila felis.</title>
        <authorList>
            <person name="Azuma Y."/>
            <person name="Hirakawa H."/>
            <person name="Yamashita A."/>
            <person name="Cai Y."/>
            <person name="Rahman M.A."/>
            <person name="Suzuki H."/>
            <person name="Mitaku S."/>
            <person name="Toh H."/>
            <person name="Goto S."/>
            <person name="Murakami T."/>
            <person name="Sugi K."/>
            <person name="Hayashi H."/>
            <person name="Fukushi H."/>
            <person name="Hattori M."/>
            <person name="Kuhara S."/>
            <person name="Shirai M."/>
        </authorList>
    </citation>
    <scope>NUCLEOTIDE SEQUENCE [LARGE SCALE GENOMIC DNA]</scope>
    <source>
        <strain>Fe/C-56</strain>
    </source>
</reference>
<proteinExistence type="inferred from homology"/>
<name>YIDD_CHLFF</name>
<evidence type="ECO:0000255" key="1">
    <source>
        <dbReference type="HAMAP-Rule" id="MF_00386"/>
    </source>
</evidence>
<gene>
    <name type="ordered locus">CF0858</name>
</gene>
<accession>Q253A8</accession>
<dbReference type="EMBL" id="AP006861">
    <property type="protein sequence ID" value="BAE81630.1"/>
    <property type="molecule type" value="Genomic_DNA"/>
</dbReference>
<dbReference type="RefSeq" id="WP_011458405.1">
    <property type="nucleotide sequence ID" value="NC_007899.1"/>
</dbReference>
<dbReference type="STRING" id="264202.gene:10544691"/>
<dbReference type="KEGG" id="cfe:BAE81630.1"/>
<dbReference type="eggNOG" id="COG0759">
    <property type="taxonomic scope" value="Bacteria"/>
</dbReference>
<dbReference type="HOGENOM" id="CLU_144811_2_1_0"/>
<dbReference type="OrthoDB" id="9801753at2"/>
<dbReference type="Proteomes" id="UP000001260">
    <property type="component" value="Chromosome"/>
</dbReference>
<dbReference type="GO" id="GO:0005886">
    <property type="term" value="C:plasma membrane"/>
    <property type="evidence" value="ECO:0007669"/>
    <property type="project" value="UniProtKB-SubCell"/>
</dbReference>
<dbReference type="HAMAP" id="MF_00386">
    <property type="entry name" value="UPF0161_YidD"/>
    <property type="match status" value="1"/>
</dbReference>
<dbReference type="InterPro" id="IPR002696">
    <property type="entry name" value="Membr_insert_effic_factor_YidD"/>
</dbReference>
<dbReference type="NCBIfam" id="TIGR00278">
    <property type="entry name" value="membrane protein insertion efficiency factor YidD"/>
    <property type="match status" value="1"/>
</dbReference>
<dbReference type="PANTHER" id="PTHR33383">
    <property type="entry name" value="MEMBRANE PROTEIN INSERTION EFFICIENCY FACTOR-RELATED"/>
    <property type="match status" value="1"/>
</dbReference>
<dbReference type="PANTHER" id="PTHR33383:SF1">
    <property type="entry name" value="MEMBRANE PROTEIN INSERTION EFFICIENCY FACTOR-RELATED"/>
    <property type="match status" value="1"/>
</dbReference>
<dbReference type="Pfam" id="PF01809">
    <property type="entry name" value="YidD"/>
    <property type="match status" value="1"/>
</dbReference>
<dbReference type="SMART" id="SM01234">
    <property type="entry name" value="Haemolytic"/>
    <property type="match status" value="1"/>
</dbReference>